<protein>
    <recommendedName>
        <fullName evidence="1">1-pyrroline-5-carboxylate dehydrogenase</fullName>
        <shortName evidence="1">P5C dehydrogenase</shortName>
        <ecNumber evidence="1">1.2.1.88</ecNumber>
    </recommendedName>
    <alternativeName>
        <fullName evidence="1">L-glutamate gamma-semialdehyde dehydrogenase</fullName>
    </alternativeName>
</protein>
<reference key="1">
    <citation type="journal article" date="2008" name="Chem. Biol. Interact.">
        <title>Extending the Bacillus cereus group genomics to putative food-borne pathogens of different toxicity.</title>
        <authorList>
            <person name="Lapidus A."/>
            <person name="Goltsman E."/>
            <person name="Auger S."/>
            <person name="Galleron N."/>
            <person name="Segurens B."/>
            <person name="Dossat C."/>
            <person name="Land M.L."/>
            <person name="Broussolle V."/>
            <person name="Brillard J."/>
            <person name="Guinebretiere M.-H."/>
            <person name="Sanchis V."/>
            <person name="Nguen-the C."/>
            <person name="Lereclus D."/>
            <person name="Richardson P."/>
            <person name="Wincker P."/>
            <person name="Weissenbach J."/>
            <person name="Ehrlich S.D."/>
            <person name="Sorokin A."/>
        </authorList>
    </citation>
    <scope>NUCLEOTIDE SEQUENCE [LARGE SCALE GENOMIC DNA]</scope>
    <source>
        <strain>KBAB4</strain>
    </source>
</reference>
<keyword id="KW-0520">NAD</keyword>
<keyword id="KW-0560">Oxidoreductase</keyword>
<comment type="catalytic activity">
    <reaction evidence="1">
        <text>L-glutamate 5-semialdehyde + NAD(+) + H2O = L-glutamate + NADH + 2 H(+)</text>
        <dbReference type="Rhea" id="RHEA:30235"/>
        <dbReference type="ChEBI" id="CHEBI:15377"/>
        <dbReference type="ChEBI" id="CHEBI:15378"/>
        <dbReference type="ChEBI" id="CHEBI:29985"/>
        <dbReference type="ChEBI" id="CHEBI:57540"/>
        <dbReference type="ChEBI" id="CHEBI:57945"/>
        <dbReference type="ChEBI" id="CHEBI:58066"/>
        <dbReference type="EC" id="1.2.1.88"/>
    </reaction>
</comment>
<comment type="pathway">
    <text evidence="1">Amino-acid degradation; L-proline degradation into L-glutamate; L-glutamate from L-proline: step 2/2.</text>
</comment>
<comment type="similarity">
    <text evidence="1">Belongs to the aldehyde dehydrogenase family. RocA subfamily.</text>
</comment>
<sequence>MVVAYKHEPFTDFSVEANKLAFEEGLKKVESYLGQDYPLIIGGEKITTEDKIVSVNPANKEELVGRVSKASRELAEKAMQVADATFQTWRKSKPEMRADILFRAAAIVRRRKHEFSAILVKEAGKPWNEADADTAEAIDFMEYYARQMLKLKDGMPVESRPIEYNRFSYIPLGVGVIISPWNFPFAIMAGMTTAAVVSGNTVLLKPASTTPVVAAKFMEVLEEAGLPAGVVNFVPGNGSEVGDYLVDHPRTRFVSFTGSRDVGIRIYERAAKVNPGQIWLKRVIAEMGGKDTIVVDKEADLELAAKSIVASAFGFSGQKCSACSRAVIHEDVYDHVLNRAVELTKELTVGNPDAKDINMGPVNDQAAFDKVMSYVAIGKEEGKIVSGGEGDDSKGWFIQPTIVADVAEDARLMKEEIFGPVVAFCKAKDFDHALAIANNTEYGLTGAVLSNNRDHIEKAREDFHVGNLYFNRGCTGAIVGYQPFGGFNMSGTDSKAGGPDYLALHMQAKTTSETL</sequence>
<gene>
    <name evidence="1" type="primary">rocA</name>
    <name type="ordered locus">BcerKBAB4_0290</name>
</gene>
<organism>
    <name type="scientific">Bacillus mycoides (strain KBAB4)</name>
    <name type="common">Bacillus weihenstephanensis</name>
    <dbReference type="NCBI Taxonomy" id="315730"/>
    <lineage>
        <taxon>Bacteria</taxon>
        <taxon>Bacillati</taxon>
        <taxon>Bacillota</taxon>
        <taxon>Bacilli</taxon>
        <taxon>Bacillales</taxon>
        <taxon>Bacillaceae</taxon>
        <taxon>Bacillus</taxon>
        <taxon>Bacillus cereus group</taxon>
    </lineage>
</organism>
<name>ROCA_BACMK</name>
<proteinExistence type="inferred from homology"/>
<evidence type="ECO:0000255" key="1">
    <source>
        <dbReference type="HAMAP-Rule" id="MF_00733"/>
    </source>
</evidence>
<feature type="chain" id="PRO_1000189848" description="1-pyrroline-5-carboxylate dehydrogenase">
    <location>
        <begin position="1"/>
        <end position="515"/>
    </location>
</feature>
<feature type="active site" evidence="1">
    <location>
        <position position="286"/>
    </location>
</feature>
<feature type="active site" evidence="1">
    <location>
        <position position="320"/>
    </location>
</feature>
<accession>A9VRG6</accession>
<dbReference type="EC" id="1.2.1.88" evidence="1"/>
<dbReference type="EMBL" id="CP000903">
    <property type="protein sequence ID" value="ABY41556.1"/>
    <property type="molecule type" value="Genomic_DNA"/>
</dbReference>
<dbReference type="RefSeq" id="WP_012260230.1">
    <property type="nucleotide sequence ID" value="NC_010184.1"/>
</dbReference>
<dbReference type="SMR" id="A9VRG6"/>
<dbReference type="KEGG" id="bwe:BcerKBAB4_0290"/>
<dbReference type="eggNOG" id="COG1012">
    <property type="taxonomic scope" value="Bacteria"/>
</dbReference>
<dbReference type="HOGENOM" id="CLU_005391_0_0_9"/>
<dbReference type="UniPathway" id="UPA00261">
    <property type="reaction ID" value="UER00374"/>
</dbReference>
<dbReference type="Proteomes" id="UP000002154">
    <property type="component" value="Chromosome"/>
</dbReference>
<dbReference type="GO" id="GO:0009898">
    <property type="term" value="C:cytoplasmic side of plasma membrane"/>
    <property type="evidence" value="ECO:0007669"/>
    <property type="project" value="TreeGrafter"/>
</dbReference>
<dbReference type="GO" id="GO:0003842">
    <property type="term" value="F:1-pyrroline-5-carboxylate dehydrogenase activity"/>
    <property type="evidence" value="ECO:0007669"/>
    <property type="project" value="UniProtKB-UniRule"/>
</dbReference>
<dbReference type="GO" id="GO:0006537">
    <property type="term" value="P:glutamate biosynthetic process"/>
    <property type="evidence" value="ECO:0007669"/>
    <property type="project" value="UniProtKB-UniRule"/>
</dbReference>
<dbReference type="GO" id="GO:0010133">
    <property type="term" value="P:proline catabolic process to glutamate"/>
    <property type="evidence" value="ECO:0007669"/>
    <property type="project" value="UniProtKB-UniPathway"/>
</dbReference>
<dbReference type="CDD" id="cd07124">
    <property type="entry name" value="ALDH_PutA-P5CDH-RocA"/>
    <property type="match status" value="1"/>
</dbReference>
<dbReference type="FunFam" id="3.40.309.10:FF:000005">
    <property type="entry name" value="1-pyrroline-5-carboxylate dehydrogenase 1"/>
    <property type="match status" value="1"/>
</dbReference>
<dbReference type="FunFam" id="3.40.605.10:FF:000045">
    <property type="entry name" value="1-pyrroline-5-carboxylate dehydrogenase 1"/>
    <property type="match status" value="1"/>
</dbReference>
<dbReference type="Gene3D" id="3.40.605.10">
    <property type="entry name" value="Aldehyde Dehydrogenase, Chain A, domain 1"/>
    <property type="match status" value="1"/>
</dbReference>
<dbReference type="Gene3D" id="3.40.309.10">
    <property type="entry name" value="Aldehyde Dehydrogenase, Chain A, domain 2"/>
    <property type="match status" value="1"/>
</dbReference>
<dbReference type="HAMAP" id="MF_00733">
    <property type="entry name" value="RocA"/>
    <property type="match status" value="1"/>
</dbReference>
<dbReference type="InterPro" id="IPR016161">
    <property type="entry name" value="Ald_DH/histidinol_DH"/>
</dbReference>
<dbReference type="InterPro" id="IPR016163">
    <property type="entry name" value="Ald_DH_C"/>
</dbReference>
<dbReference type="InterPro" id="IPR016160">
    <property type="entry name" value="Ald_DH_CS_CYS"/>
</dbReference>
<dbReference type="InterPro" id="IPR029510">
    <property type="entry name" value="Ald_DH_CS_GLU"/>
</dbReference>
<dbReference type="InterPro" id="IPR016162">
    <property type="entry name" value="Ald_DH_N"/>
</dbReference>
<dbReference type="InterPro" id="IPR015590">
    <property type="entry name" value="Aldehyde_DH_dom"/>
</dbReference>
<dbReference type="InterPro" id="IPR050485">
    <property type="entry name" value="Proline_metab_enzyme"/>
</dbReference>
<dbReference type="InterPro" id="IPR005932">
    <property type="entry name" value="RocA"/>
</dbReference>
<dbReference type="InterPro" id="IPR047597">
    <property type="entry name" value="RocA_bacillales"/>
</dbReference>
<dbReference type="NCBIfam" id="TIGR01237">
    <property type="entry name" value="D1pyr5carbox2"/>
    <property type="match status" value="1"/>
</dbReference>
<dbReference type="NCBIfam" id="NF002852">
    <property type="entry name" value="PRK03137.1"/>
    <property type="match status" value="1"/>
</dbReference>
<dbReference type="PANTHER" id="PTHR42862">
    <property type="entry name" value="DELTA-1-PYRROLINE-5-CARBOXYLATE DEHYDROGENASE 1, ISOFORM A-RELATED"/>
    <property type="match status" value="1"/>
</dbReference>
<dbReference type="PANTHER" id="PTHR42862:SF1">
    <property type="entry name" value="DELTA-1-PYRROLINE-5-CARBOXYLATE DEHYDROGENASE 2, ISOFORM A-RELATED"/>
    <property type="match status" value="1"/>
</dbReference>
<dbReference type="Pfam" id="PF00171">
    <property type="entry name" value="Aldedh"/>
    <property type="match status" value="1"/>
</dbReference>
<dbReference type="SUPFAM" id="SSF53720">
    <property type="entry name" value="ALDH-like"/>
    <property type="match status" value="1"/>
</dbReference>
<dbReference type="PROSITE" id="PS00070">
    <property type="entry name" value="ALDEHYDE_DEHYDR_CYS"/>
    <property type="match status" value="1"/>
</dbReference>
<dbReference type="PROSITE" id="PS00687">
    <property type="entry name" value="ALDEHYDE_DEHYDR_GLU"/>
    <property type="match status" value="1"/>
</dbReference>